<name>MAME_PARM1</name>
<accession>Q2W8Q8</accession>
<organism>
    <name type="scientific">Paramagnetospirillum magneticum (strain ATCC 700264 / AMB-1)</name>
    <name type="common">Magnetospirillum magneticum</name>
    <dbReference type="NCBI Taxonomy" id="342108"/>
    <lineage>
        <taxon>Bacteria</taxon>
        <taxon>Pseudomonadati</taxon>
        <taxon>Pseudomonadota</taxon>
        <taxon>Alphaproteobacteria</taxon>
        <taxon>Rhodospirillales</taxon>
        <taxon>Magnetospirillaceae</taxon>
        <taxon>Paramagnetospirillum</taxon>
    </lineage>
</organism>
<dbReference type="EC" id="3.4.21.-" evidence="15"/>
<dbReference type="EMBL" id="AP007255">
    <property type="protein sequence ID" value="BAE49767.1"/>
    <property type="molecule type" value="Genomic_DNA"/>
</dbReference>
<dbReference type="SMR" id="Q2W8Q8"/>
<dbReference type="STRING" id="342108.amb0963"/>
<dbReference type="KEGG" id="mag:amb0963"/>
<dbReference type="HOGENOM" id="CLU_020120_1_0_5"/>
<dbReference type="OrthoDB" id="7313317at2"/>
<dbReference type="Proteomes" id="UP000007058">
    <property type="component" value="Chromosome"/>
</dbReference>
<dbReference type="GO" id="GO:0110146">
    <property type="term" value="C:magnetosome membrane"/>
    <property type="evidence" value="ECO:0000250"/>
    <property type="project" value="UniProtKB"/>
</dbReference>
<dbReference type="GO" id="GO:0009055">
    <property type="term" value="F:electron transfer activity"/>
    <property type="evidence" value="ECO:0007669"/>
    <property type="project" value="InterPro"/>
</dbReference>
<dbReference type="GO" id="GO:0020037">
    <property type="term" value="F:heme binding"/>
    <property type="evidence" value="ECO:0007669"/>
    <property type="project" value="InterPro"/>
</dbReference>
<dbReference type="GO" id="GO:0046872">
    <property type="term" value="F:metal ion binding"/>
    <property type="evidence" value="ECO:0007669"/>
    <property type="project" value="UniProtKB-KW"/>
</dbReference>
<dbReference type="GO" id="GO:0004252">
    <property type="term" value="F:serine-type endopeptidase activity"/>
    <property type="evidence" value="ECO:0000315"/>
    <property type="project" value="UniProtKB"/>
</dbReference>
<dbReference type="GO" id="GO:0006508">
    <property type="term" value="P:proteolysis"/>
    <property type="evidence" value="ECO:0007669"/>
    <property type="project" value="UniProtKB-KW"/>
</dbReference>
<dbReference type="CDD" id="cd23087">
    <property type="entry name" value="cpPDZ1_MamE-like"/>
    <property type="match status" value="1"/>
</dbReference>
<dbReference type="CDD" id="cd23086">
    <property type="entry name" value="cpPDZ2_MamE-like"/>
    <property type="match status" value="1"/>
</dbReference>
<dbReference type="Gene3D" id="2.30.42.10">
    <property type="match status" value="2"/>
</dbReference>
<dbReference type="Gene3D" id="2.30.42.60">
    <property type="match status" value="1"/>
</dbReference>
<dbReference type="Gene3D" id="2.40.10.120">
    <property type="match status" value="1"/>
</dbReference>
<dbReference type="InterPro" id="IPR051201">
    <property type="entry name" value="Chloro_Bact_Ser_Proteases"/>
</dbReference>
<dbReference type="InterPro" id="IPR009056">
    <property type="entry name" value="Cyt_c-like_dom"/>
</dbReference>
<dbReference type="InterPro" id="IPR040963">
    <property type="entry name" value="MCR"/>
</dbReference>
<dbReference type="InterPro" id="IPR036280">
    <property type="entry name" value="Multihaem_cyt_sf"/>
</dbReference>
<dbReference type="InterPro" id="IPR001478">
    <property type="entry name" value="PDZ"/>
</dbReference>
<dbReference type="InterPro" id="IPR036034">
    <property type="entry name" value="PDZ_sf"/>
</dbReference>
<dbReference type="InterPro" id="IPR009003">
    <property type="entry name" value="Peptidase_S1_PA"/>
</dbReference>
<dbReference type="InterPro" id="IPR001940">
    <property type="entry name" value="Peptidase_S1C"/>
</dbReference>
<dbReference type="NCBIfam" id="NF040960">
    <property type="entry name" value="MamE"/>
    <property type="match status" value="1"/>
</dbReference>
<dbReference type="PANTHER" id="PTHR43343">
    <property type="entry name" value="PEPTIDASE S12"/>
    <property type="match status" value="1"/>
</dbReference>
<dbReference type="PANTHER" id="PTHR43343:SF3">
    <property type="entry name" value="PROTEASE DO-LIKE 8, CHLOROPLASTIC"/>
    <property type="match status" value="1"/>
</dbReference>
<dbReference type="Pfam" id="PF18509">
    <property type="entry name" value="MCR"/>
    <property type="match status" value="2"/>
</dbReference>
<dbReference type="Pfam" id="PF00595">
    <property type="entry name" value="PDZ"/>
    <property type="match status" value="1"/>
</dbReference>
<dbReference type="Pfam" id="PF13180">
    <property type="entry name" value="PDZ_2"/>
    <property type="match status" value="1"/>
</dbReference>
<dbReference type="Pfam" id="PF13365">
    <property type="entry name" value="Trypsin_2"/>
    <property type="match status" value="1"/>
</dbReference>
<dbReference type="PRINTS" id="PR00834">
    <property type="entry name" value="PROTEASES2C"/>
</dbReference>
<dbReference type="SMART" id="SM00228">
    <property type="entry name" value="PDZ"/>
    <property type="match status" value="2"/>
</dbReference>
<dbReference type="SUPFAM" id="SSF48695">
    <property type="entry name" value="Multiheme cytochromes"/>
    <property type="match status" value="1"/>
</dbReference>
<dbReference type="SUPFAM" id="SSF50156">
    <property type="entry name" value="PDZ domain-like"/>
    <property type="match status" value="2"/>
</dbReference>
<dbReference type="SUPFAM" id="SSF50494">
    <property type="entry name" value="Trypsin-like serine proteases"/>
    <property type="match status" value="1"/>
</dbReference>
<dbReference type="PROSITE" id="PS51007">
    <property type="entry name" value="CYTC"/>
    <property type="match status" value="1"/>
</dbReference>
<dbReference type="PROSITE" id="PS51008">
    <property type="entry name" value="MULTIHEME_CYTC"/>
    <property type="match status" value="1"/>
</dbReference>
<dbReference type="PROSITE" id="PS50106">
    <property type="entry name" value="PDZ"/>
    <property type="match status" value="2"/>
</dbReference>
<protein>
    <recommendedName>
        <fullName evidence="13">Magnetosome formation protease MamE</fullName>
        <ecNumber evidence="15">3.4.21.-</ecNumber>
    </recommendedName>
    <alternativeName>
        <fullName evidence="13">Magnetochrome MamE</fullName>
    </alternativeName>
    <alternativeName>
        <fullName evidence="13">Magnetosome serine protease MamE</fullName>
    </alternativeName>
</protein>
<feature type="chain" id="PRO_0000447779" description="Magnetosome formation protease MamE">
    <location>
        <begin position="1"/>
        <end position="728"/>
    </location>
</feature>
<feature type="topological domain" description="Cytoplasmic" evidence="13">
    <location>
        <begin position="1"/>
        <end position="21"/>
    </location>
</feature>
<feature type="transmembrane region" description="Helical" evidence="3">
    <location>
        <begin position="22"/>
        <end position="42"/>
    </location>
</feature>
<feature type="topological domain" description="Lumenal" evidence="17">
    <location>
        <begin position="43"/>
        <end position="728"/>
    </location>
</feature>
<feature type="domain" description="PDZ 1" evidence="4">
    <location>
        <begin position="471"/>
        <end position="573"/>
    </location>
</feature>
<feature type="domain" description="PDZ 2" evidence="4">
    <location>
        <begin position="622"/>
        <end position="721"/>
    </location>
</feature>
<feature type="short sequence motif" description="MCR (magnetochrome) 1" evidence="16">
    <location>
        <begin position="375"/>
        <end position="398"/>
    </location>
</feature>
<feature type="short sequence motif" description="MCR 2" evidence="16">
    <location>
        <begin position="421"/>
        <end position="444"/>
    </location>
</feature>
<feature type="active site" description="Charge relay system" evidence="1 11 15">
    <location>
        <position position="188"/>
    </location>
</feature>
<feature type="active site" description="Charge relay system" evidence="1 11 15">
    <location>
        <position position="221"/>
    </location>
</feature>
<feature type="active site" description="Charge relay system" evidence="1 11 15">
    <location>
        <position position="297"/>
    </location>
</feature>
<feature type="binding site" description="covalent" evidence="5 15 16">
    <location>
        <position position="392"/>
    </location>
    <ligand>
        <name>heme</name>
        <dbReference type="ChEBI" id="CHEBI:30413"/>
        <label>1</label>
    </ligand>
</feature>
<feature type="binding site" description="covalent" evidence="5 15 16">
    <location>
        <position position="395"/>
    </location>
    <ligand>
        <name>heme</name>
        <dbReference type="ChEBI" id="CHEBI:30413"/>
        <label>1</label>
    </ligand>
</feature>
<feature type="binding site" description="axial binding residue" evidence="5 15 16">
    <location>
        <position position="396"/>
    </location>
    <ligand>
        <name>heme</name>
        <dbReference type="ChEBI" id="CHEBI:30413"/>
        <label>1</label>
    </ligand>
    <ligandPart>
        <name>Fe</name>
        <dbReference type="ChEBI" id="CHEBI:18248"/>
    </ligandPart>
</feature>
<feature type="binding site" description="covalent" evidence="15 16">
    <location>
        <position position="438"/>
    </location>
    <ligand>
        <name>heme</name>
        <dbReference type="ChEBI" id="CHEBI:30413"/>
        <label>2</label>
    </ligand>
</feature>
<feature type="binding site" description="covalent" evidence="15 16">
    <location>
        <position position="441"/>
    </location>
    <ligand>
        <name>heme</name>
        <dbReference type="ChEBI" id="CHEBI:30413"/>
        <label>2</label>
    </ligand>
</feature>
<feature type="binding site" description="axial binding residue" evidence="15 16">
    <location>
        <position position="442"/>
    </location>
    <ligand>
        <name>heme</name>
        <dbReference type="ChEBI" id="CHEBI:30413"/>
        <label>2</label>
    </ligand>
    <ligandPart>
        <name>Fe</name>
        <dbReference type="ChEBI" id="CHEBI:18248"/>
    </ligandPart>
</feature>
<feature type="mutagenesis site" description="Some loss of magnetic response; when associated with A-221 and A-297. Significant loss of magnetic response, MamE, MamO, MamP no longer processed when amb1002 to amb1007 are also deleted; when associated with A-221 and A-297." evidence="8 11">
    <original>H</original>
    <variation>A</variation>
    <location>
        <position position="188"/>
    </location>
</feature>
<feature type="mutagenesis site" description="Some loss of magnetic response; when associated with A-188 and A-297. Significant loss of magnetic response, MamE, MamO, MamP no longer processed when amb1002 to amb1007 are also deleted; when associated with A188 and A-297." evidence="8">
    <original>D</original>
    <variation>A</variation>
    <location>
        <position position="221"/>
    </location>
</feature>
<feature type="mutagenesis site" description="Increased protease activity, decreased dependency on MamO, magnetic response lower than wild-type but higher than deletion mutant." evidence="12">
    <original>Q</original>
    <variation>P</variation>
    <location>
        <position position="294"/>
    </location>
</feature>
<feature type="mutagenesis site" description="Loss of protease activity. Some loss of magnetic response; when associated with A-188 and A-221. Significant loss of magnetic response, MamE, MamO, MamP no longer processed when amb1002 to amb1007 are also deleted; when associated with A188 and A-221." evidence="8 12">
    <original>S</original>
    <variation>A</variation>
    <location>
        <position position="297"/>
    </location>
</feature>
<feature type="mutagenesis site" description="Removes both putative heme-binding sites, partial loss of magnetic response, significant loss of magnetic response when amb1002 to amb1007 are also deleted. The latter mutant is capable of making nearly wild-type size crystals, but makes them less frequently and later than wild-type." evidence="8">
    <original>CTTCHDLIPAGNGRPAPMMPIAAPIPPPPIPMGAVSPHTDGRQNMNCANC</original>
    <variation>ATTAHDLIPAGNGRPAPMMPIAAPIPPPPIPMGAVSPHTDGRQNMNAANA</variation>
    <location>
        <begin position="392"/>
        <end position="441"/>
    </location>
</feature>
<keyword id="KW-0068">Autocatalytic cleavage</keyword>
<keyword id="KW-0091">Biomineralization</keyword>
<keyword id="KW-0349">Heme</keyword>
<keyword id="KW-0378">Hydrolase</keyword>
<keyword id="KW-0408">Iron</keyword>
<keyword id="KW-1281">Magnetosome</keyword>
<keyword id="KW-0472">Membrane</keyword>
<keyword id="KW-0479">Metal-binding</keyword>
<keyword id="KW-0645">Protease</keyword>
<keyword id="KW-0677">Repeat</keyword>
<keyword id="KW-0812">Transmembrane</keyword>
<keyword id="KW-1133">Transmembrane helix</keyword>
<reference key="1">
    <citation type="journal article" date="2005" name="DNA Res.">
        <title>Complete genome sequence of the facultative anaerobic magnetotactic bacterium Magnetospirillum sp. strain AMB-1.</title>
        <authorList>
            <person name="Matsunaga T."/>
            <person name="Okamura Y."/>
            <person name="Fukuda Y."/>
            <person name="Wahyudi A.T."/>
            <person name="Murase Y."/>
            <person name="Takeyama H."/>
        </authorList>
    </citation>
    <scope>NUCLEOTIDE SEQUENCE [LARGE SCALE GENOMIC DNA]</scope>
    <scope>SUBCELLULAR LOCATION</scope>
    <source>
        <strain>ATCC 700264 / AMB-1</strain>
    </source>
</reference>
<reference key="2">
    <citation type="journal article" date="2010" name="PLoS ONE">
        <title>A second actin-like MamK protein in Magnetospirillum magneticum AMB-1 encoded outside the genomic magnetosome island.</title>
        <authorList>
            <person name="Rioux J.B."/>
            <person name="Philippe N."/>
            <person name="Pereira S."/>
            <person name="Pignol D."/>
            <person name="Wu L.F."/>
            <person name="Ginet N."/>
        </authorList>
    </citation>
    <scope>INDUCTION</scope>
    <source>
        <strain>ATCC 700264 / AMB-1</strain>
    </source>
</reference>
<reference key="3">
    <citation type="journal article" date="2010" name="Proc. Natl. Acad. Sci. U.S.A.">
        <title>Comprehensive genetic dissection of the magnetosome gene island reveals the step-wise assembly of a prokaryotic organelle.</title>
        <authorList>
            <person name="Murat D."/>
            <person name="Quinlan A."/>
            <person name="Vali H."/>
            <person name="Komeili A."/>
        </authorList>
    </citation>
    <scope>FUNCTION</scope>
    <scope>PROBABLE OPERON</scope>
    <scope>DISRUPTION PHENOTYPE</scope>
    <source>
        <strain>ATCC 700264 / AMB-1</strain>
    </source>
</reference>
<reference key="4">
    <citation type="journal article" date="2011" name="Mol. Microbiol.">
        <title>The HtrA/DegP family protease MamE is a bifunctional protein with roles in magnetosome protein localization and magnetite biomineralization.</title>
        <authorList>
            <person name="Quinlan A."/>
            <person name="Murat D."/>
            <person name="Vali H."/>
            <person name="Komeili A."/>
        </authorList>
    </citation>
    <scope>PROBABLE FUNCTION AS A PROTEASE</scope>
    <scope>COFACTOR</scope>
    <scope>SUBCELLULAR LOCATION</scope>
    <scope>DISRUPTION PHENOTYPE</scope>
    <scope>MUTAGENESIS OF HIS-188; ASP-221; SER-297 AND 392-CYS--CYS-441</scope>
    <source>
        <strain>ATCC 700264 / AMB-1</strain>
    </source>
</reference>
<reference key="5">
    <citation type="journal article" date="2012" name="Biochem. Soc. Trans.">
        <title>Magnetochrome: a c-type cytochrome domain specific to magnetotatic bacteria.</title>
        <authorList>
            <person name="Siponen M.I."/>
            <person name="Adryanczyk G."/>
            <person name="Ginet N."/>
            <person name="Arnoux P."/>
            <person name="Pignol D."/>
        </authorList>
    </citation>
    <scope>POSSIBLE COFACTOR</scope>
    <scope>BIOPHYSICOCHEMICAL PROPERTIES</scope>
    <scope>DOMAIN</scope>
    <source>
        <strain>ATCC 700264 / AMB-1</strain>
    </source>
</reference>
<reference key="6">
    <citation type="journal article" date="2012" name="Mol. Microbiol.">
        <title>The magnetosome membrane protein, MmsF, is a major regulator of magnetite biomineralization in Magnetospirillum magneticum AMB-1.</title>
        <authorList>
            <person name="Murat D."/>
            <person name="Falahati V."/>
            <person name="Bertinetti L."/>
            <person name="Csencsits R."/>
            <person name="Koernig A."/>
            <person name="Downing K."/>
            <person name="Faivre D."/>
            <person name="Komeili A."/>
        </authorList>
    </citation>
    <scope>MINIMAL MAGNETOSOME ISLAND</scope>
    <source>
        <strain>ATCC 700264 / AMB-1</strain>
    </source>
</reference>
<reference key="7">
    <citation type="journal article" date="2016" name="J. Biol. Chem.">
        <title>Magnetite biomineralization in Magnetospirillum magneticum is regulated by a switch-like behavior in the HtrA protease MamE.</title>
        <authorList>
            <person name="Hershey D.M."/>
            <person name="Browne P.J."/>
            <person name="Iavarone A.T."/>
            <person name="Teyra J."/>
            <person name="Lee E.H."/>
            <person name="Sidhu S.S."/>
            <person name="Komeili A."/>
        </authorList>
    </citation>
    <scope>FUNCTION AS A PROTEASE</scope>
    <scope>ACTIVITY REGULATION</scope>
    <scope>PROBABLE TOPOLOGY</scope>
    <scope>MUTAGENESIS OF GLN-294 AND SER-297</scope>
    <source>
        <strain>ATCC 700264 / AMB-1</strain>
    </source>
</reference>
<reference key="8">
    <citation type="journal article" date="2016" name="PLoS Biol.">
        <title>MamO is a repurposed serine protease that promotes magnetite biomineralization through direct transition metal binding in magnetotactic bacteria.</title>
        <authorList>
            <person name="Hershey D.M."/>
            <person name="Ren X."/>
            <person name="Melnyk R.A."/>
            <person name="Browne P.J."/>
            <person name="Ozyamak E."/>
            <person name="Jones S.R."/>
            <person name="Chang M.C."/>
            <person name="Hurley J.H."/>
            <person name="Komeili A."/>
        </authorList>
    </citation>
    <scope>FUNCTION AS A PROTEASE</scope>
    <scope>PROTEOLYTIC CLEAVAGE</scope>
    <scope>MUTAGENESIS OF HIS-188; ASP-221 AND SER-297</scope>
    <source>
        <strain>ATCC 700264 / AMB-1</strain>
    </source>
</reference>
<evidence type="ECO:0000250" key="1">
    <source>
        <dbReference type="UniProtKB" id="P0C0V0"/>
    </source>
</evidence>
<evidence type="ECO:0000250" key="2">
    <source>
        <dbReference type="UniProtKB" id="V6F2B6"/>
    </source>
</evidence>
<evidence type="ECO:0000255" key="3"/>
<evidence type="ECO:0000255" key="4">
    <source>
        <dbReference type="PROSITE-ProRule" id="PRU00143"/>
    </source>
</evidence>
<evidence type="ECO:0000255" key="5">
    <source>
        <dbReference type="PROSITE-ProRule" id="PRU00433"/>
    </source>
</evidence>
<evidence type="ECO:0000269" key="6">
    <source>
    </source>
</evidence>
<evidence type="ECO:0000269" key="7">
    <source>
    </source>
</evidence>
<evidence type="ECO:0000269" key="8">
    <source>
    </source>
</evidence>
<evidence type="ECO:0000269" key="9">
    <source>
    </source>
</evidence>
<evidence type="ECO:0000269" key="10">
    <source>
    </source>
</evidence>
<evidence type="ECO:0000269" key="11">
    <source>
    </source>
</evidence>
<evidence type="ECO:0000269" key="12">
    <source>
    </source>
</evidence>
<evidence type="ECO:0000305" key="13"/>
<evidence type="ECO:0000305" key="14">
    <source>
    </source>
</evidence>
<evidence type="ECO:0000305" key="15">
    <source>
    </source>
</evidence>
<evidence type="ECO:0000305" key="16">
    <source>
    </source>
</evidence>
<evidence type="ECO:0000305" key="17">
    <source>
    </source>
</evidence>
<proteinExistence type="evidence at protein level"/>
<sequence>MAMFNGDVEDGGRGDASCGKDLKRYLMLMGVVALVVLFGAFIYRQSSGGLRLGAMLEQMGRGTGPAVNVPVQQGGPSAAVNPAMSVPAGARVAPPSAAGAIATMPPMVDFGPAPIGAGGPFSSVVTLLRNSVVAVTASSANGQAMPDPLGLANPDGLPHFANPATRSVENIGTGVIVRNDGFIVTNYHVVRGANSVFVTVQDDVGSTRYSAEIIKMDEALDLALLKVAPKTPLTAAVLGDSDGVQVADEVIAIGTPFGLDMTVSRGIISAKRKSMVIEGVTHSNLLQTDAAINQGNSGGPLVISNGTVVGINTAIYTPNGAFAGIGFAVPSNQARLFILDEVGWLPTSTAEGASMGLVAMQRPMGGGVGAAGPAIFAGTRAPHTDGRQNMDCTTCHDLIPAGNGRPAPMMPIAAPIPPPPIPMGAVSPHTDGRQNMNCANCHQMLGGAAPIAAPGLGGGAYRFAQPPGSLAINIQGPRGGQSTAAGTGRVTLLGAALTPMSQRLGAQTGVPVGRGVFISGVTPNTPAATAGLRPGDVLLKVDGRPVRLPEEVSAIMVEMHAGRSVRLGVLRDGDVRNMTLVAGPAGLAAAAVQAPAIADMAQPPMGGMAPTAPGMVAVPGGPAVMPKPPTEFNWLGMEIETFQAPRPITGVPGAVPVPGAKGAQVAEVLVGSRAAVAGLQANDLILEVNNRPVAGPARLDAAIKGATNAGQQILLKVNRNGQEFWIVL</sequence>
<gene>
    <name type="primary">mamE</name>
    <name type="ordered locus">amb0963</name>
</gene>
<comment type="function">
    <text evidence="7 8 11 15">Acts at 2 distinct steps of magnetosome formation; required for correct localization of proteins to the magnetosome while the protease activity is required for maturation of small magnetite crystals into larger, functional ones. The 2 functions are separable by mutation (PubMed:21414040). Probably cleaves at least itself, MamO and MamP; cleavage requires the putative transport domain of MamO (Probable) (PubMed:26981620). Involved in localization of some proteins (at least MamA, MamC, MamF, MamI and MamJ) to the magnetosome (PubMed:20212111, PubMed:21414040).</text>
</comment>
<comment type="cofactor">
    <cofactor evidence="15 16">
        <name>heme</name>
        <dbReference type="ChEBI" id="CHEBI:30413"/>
    </cofactor>
    <text evidence="15 16">Probably binds 2 heme groups via the 2 magnetochrome (MCR) motifs.</text>
</comment>
<comment type="activity regulation">
    <text evidence="12">Autoproteolysis is stimulated by exogenous substrates or peptides that bind to its PDZ domains; may be stimulated by an environmental cue in vivo. Protease activity is tightly regulated; increasing its activity decreases substrate levels and disturbs biomineralization.</text>
</comment>
<comment type="biophysicochemical properties">
    <redoxPotential>
        <text evidence="10">E(0) is -32 mV.</text>
    </redoxPotential>
</comment>
<comment type="subunit">
    <text evidence="2">Might interact with MamB via PDZ1.</text>
</comment>
<comment type="subcellular location">
    <subcellularLocation>
        <location evidence="6 15">Magnetosome membrane</location>
        <topology evidence="3">Single-pass membrane protein</topology>
    </subcellularLocation>
</comment>
<comment type="induction">
    <text evidence="6 14">Expressed during exponential phase in static growth conditions (PubMed:20161777). Part of the probable 18 gene mamAB operon (Probable).</text>
</comment>
<comment type="PTM">
    <text evidence="11">Subject to autocatalytic cleavage; cleavage also requires MamO.</text>
</comment>
<comment type="disruption phenotype">
    <text evidence="7 8">Cells have no magnetic response but still make empty magnetosome membranes. Alterations in localization of magnetosome proteins; MamA is mislocalized to random foci near the cell membrane, while MamJ is more diffuse than in wild-type (PubMed:20212111). Alterations in localization of magnetosome proteins MamC, MamF and MamI (PubMed:21414040). Deletion of genes mamH to mamV (amb0961 to amb0978) gives cells with no magnetosomes and no magnetic response (PubMed:20212111).</text>
</comment>
<comment type="miscellaneous">
    <text evidence="13">This bacteria makes up to 20 cubo-octahedral magnetosomes of about 45 nm in diameter which contain membrane-bound crystals of magnetite (Fe(3)O(4)).</text>
</comment>
<comment type="miscellaneous">
    <text evidence="15">There are 2 paralogous genes in the genome; limE (amb1002) has a partially overlapping function with MamE, while mamE-like (amb0410) does not seem to play a role in biomineralization.</text>
</comment>
<comment type="miscellaneous">
    <text evidence="9">Expression of just the minimal mamAB gene cluster (amb0961 to amb0978), including this gene, is sufficient to form a minimal magnetosome chain with small magnetite particles.</text>
</comment>
<comment type="miscellaneous">
    <text evidence="13">There is a third MCR motif in the M.gryphiswaldense strain MSR-1 MamE ortholog.</text>
</comment>
<comment type="similarity">
    <text evidence="13">In the N-terminal section; belongs to the peptidase S1C family.</text>
</comment>